<sequence>MNPVPAQREYFLDSIRAWLMLLGIPFHISLIYSSHTWHVNSAEPSLWLTLFNDFIHSFRMQVFFVISGYFSYMLFLRYPLKKWWKVRVERVGIPMLTAIPLLTLPQFIMLQYVKGKAESWPGLSLYDKYNTLAWELISHLWFLLVLVVMTTLCVWIFKRIRNNLENSDKTNKKFSMVKLSVIFLCLGIGYAVIRRTIFIVYPPILSNGMFNFIVMQTLFYLPFFILGALAFIFPHLKALFTTPSRGCTLAAALAFVAYLLNQRYGSGDAWMYETESVITMVLGLWMVNVVFSFGHRLLNFQSARVTYFVNASLFIYLVHHPLTLFFGAYITPHITSNWLGFLCGLIFVVGIAIILYEIHLRIPLLKFLFSGKPVVKRENDKAPAR</sequence>
<organism>
    <name type="scientific">Escherichia coli (strain SE11)</name>
    <dbReference type="NCBI Taxonomy" id="409438"/>
    <lineage>
        <taxon>Bacteria</taxon>
        <taxon>Pseudomonadati</taxon>
        <taxon>Pseudomonadota</taxon>
        <taxon>Gammaproteobacteria</taxon>
        <taxon>Enterobacterales</taxon>
        <taxon>Enterobacteriaceae</taxon>
        <taxon>Escherichia</taxon>
    </lineage>
</organism>
<name>OPGC_ECOSE</name>
<proteinExistence type="inferred from homology"/>
<comment type="function">
    <text evidence="1">Necessary for the succinyl substitution of periplasmic glucans. Could catalyze the transfer of succinyl residues from the cytoplasmic side of the membrane to the nascent glucan backbones on the periplasmic side of the membrane.</text>
</comment>
<comment type="pathway">
    <text evidence="1">Glycan metabolism; osmoregulated periplasmic glucan (OPG) biosynthesis.</text>
</comment>
<comment type="subcellular location">
    <subcellularLocation>
        <location evidence="1">Cell membrane</location>
        <topology evidence="1">Multi-pass membrane protein</topology>
    </subcellularLocation>
</comment>
<comment type="similarity">
    <text evidence="1">Belongs to the acyltransferase 3 family. OpgC subfamily.</text>
</comment>
<reference key="1">
    <citation type="journal article" date="2008" name="DNA Res.">
        <title>Complete genome sequence and comparative analysis of the wild-type commensal Escherichia coli strain SE11 isolated from a healthy adult.</title>
        <authorList>
            <person name="Oshima K."/>
            <person name="Toh H."/>
            <person name="Ogura Y."/>
            <person name="Sasamoto H."/>
            <person name="Morita H."/>
            <person name="Park S.-H."/>
            <person name="Ooka T."/>
            <person name="Iyoda S."/>
            <person name="Taylor T.D."/>
            <person name="Hayashi T."/>
            <person name="Itoh K."/>
            <person name="Hattori M."/>
        </authorList>
    </citation>
    <scope>NUCLEOTIDE SEQUENCE [LARGE SCALE GENOMIC DNA]</scope>
    <source>
        <strain>SE11</strain>
    </source>
</reference>
<dbReference type="EC" id="2.1.-.-" evidence="1"/>
<dbReference type="EMBL" id="AP009240">
    <property type="protein sequence ID" value="BAG76634.1"/>
    <property type="molecule type" value="Genomic_DNA"/>
</dbReference>
<dbReference type="RefSeq" id="WP_001070350.1">
    <property type="nucleotide sequence ID" value="NC_011415.1"/>
</dbReference>
<dbReference type="GeneID" id="93776367"/>
<dbReference type="KEGG" id="ecy:ECSE_1110"/>
<dbReference type="HOGENOM" id="CLU_036182_2_0_6"/>
<dbReference type="UniPathway" id="UPA00637"/>
<dbReference type="Proteomes" id="UP000008199">
    <property type="component" value="Chromosome"/>
</dbReference>
<dbReference type="GO" id="GO:0005886">
    <property type="term" value="C:plasma membrane"/>
    <property type="evidence" value="ECO:0007669"/>
    <property type="project" value="UniProtKB-SubCell"/>
</dbReference>
<dbReference type="GO" id="GO:0016747">
    <property type="term" value="F:acyltransferase activity, transferring groups other than amino-acyl groups"/>
    <property type="evidence" value="ECO:0007669"/>
    <property type="project" value="InterPro"/>
</dbReference>
<dbReference type="GO" id="GO:0016741">
    <property type="term" value="F:transferase activity, transferring one-carbon groups"/>
    <property type="evidence" value="ECO:0007669"/>
    <property type="project" value="UniProtKB-UniRule"/>
</dbReference>
<dbReference type="GO" id="GO:0009250">
    <property type="term" value="P:glucan biosynthetic process"/>
    <property type="evidence" value="ECO:0007669"/>
    <property type="project" value="UniProtKB-UniRule"/>
</dbReference>
<dbReference type="HAMAP" id="MF_01066">
    <property type="entry name" value="MdoC_OpgC"/>
    <property type="match status" value="1"/>
</dbReference>
<dbReference type="InterPro" id="IPR002656">
    <property type="entry name" value="Acyl_transf_3_dom"/>
</dbReference>
<dbReference type="InterPro" id="IPR050623">
    <property type="entry name" value="Glucan_succinyl_AcylTrfase"/>
</dbReference>
<dbReference type="InterPro" id="IPR023723">
    <property type="entry name" value="Glucans_biosynth_C"/>
</dbReference>
<dbReference type="NCBIfam" id="NF003014">
    <property type="entry name" value="PRK03854.1"/>
    <property type="match status" value="1"/>
</dbReference>
<dbReference type="PANTHER" id="PTHR36927">
    <property type="entry name" value="BLR4337 PROTEIN"/>
    <property type="match status" value="1"/>
</dbReference>
<dbReference type="PANTHER" id="PTHR36927:SF3">
    <property type="entry name" value="GLUCANS BIOSYNTHESIS PROTEIN C"/>
    <property type="match status" value="1"/>
</dbReference>
<dbReference type="Pfam" id="PF01757">
    <property type="entry name" value="Acyl_transf_3"/>
    <property type="match status" value="1"/>
</dbReference>
<gene>
    <name evidence="1" type="primary">mdoC</name>
    <name evidence="1" type="synonym">opgC</name>
    <name type="ordered locus">ECSE_1110</name>
</gene>
<evidence type="ECO:0000255" key="1">
    <source>
        <dbReference type="HAMAP-Rule" id="MF_01066"/>
    </source>
</evidence>
<keyword id="KW-0012">Acyltransferase</keyword>
<keyword id="KW-1003">Cell membrane</keyword>
<keyword id="KW-0472">Membrane</keyword>
<keyword id="KW-0808">Transferase</keyword>
<keyword id="KW-0812">Transmembrane</keyword>
<keyword id="KW-1133">Transmembrane helix</keyword>
<feature type="chain" id="PRO_1000136568" description="Glucans biosynthesis protein C">
    <location>
        <begin position="1"/>
        <end position="385"/>
    </location>
</feature>
<feature type="transmembrane region" description="Helical" evidence="1">
    <location>
        <begin position="17"/>
        <end position="37"/>
    </location>
</feature>
<feature type="transmembrane region" description="Helical" evidence="1">
    <location>
        <begin position="60"/>
        <end position="80"/>
    </location>
</feature>
<feature type="transmembrane region" description="Helical" evidence="1">
    <location>
        <begin position="91"/>
        <end position="111"/>
    </location>
</feature>
<feature type="transmembrane region" description="Helical" evidence="1">
    <location>
        <begin position="137"/>
        <end position="157"/>
    </location>
</feature>
<feature type="transmembrane region" description="Helical" evidence="1">
    <location>
        <begin position="173"/>
        <end position="193"/>
    </location>
</feature>
<feature type="transmembrane region" description="Helical" evidence="1">
    <location>
        <begin position="212"/>
        <end position="232"/>
    </location>
</feature>
<feature type="transmembrane region" description="Helical" evidence="1">
    <location>
        <begin position="239"/>
        <end position="259"/>
    </location>
</feature>
<feature type="transmembrane region" description="Helical" evidence="1">
    <location>
        <begin position="274"/>
        <end position="294"/>
    </location>
</feature>
<feature type="transmembrane region" description="Helical" evidence="1">
    <location>
        <begin position="311"/>
        <end position="331"/>
    </location>
</feature>
<feature type="transmembrane region" description="Helical" evidence="1">
    <location>
        <begin position="338"/>
        <end position="358"/>
    </location>
</feature>
<accession>B6I9C4</accession>
<protein>
    <recommendedName>
        <fullName evidence="1">Glucans biosynthesis protein C</fullName>
        <ecNumber evidence="1">2.1.-.-</ecNumber>
    </recommendedName>
</protein>